<organism>
    <name type="scientific">Actinia equina</name>
    <name type="common">Beadlet anemone</name>
    <dbReference type="NCBI Taxonomy" id="6106"/>
    <lineage>
        <taxon>Eukaryota</taxon>
        <taxon>Metazoa</taxon>
        <taxon>Cnidaria</taxon>
        <taxon>Anthozoa</taxon>
        <taxon>Hexacorallia</taxon>
        <taxon>Actiniaria</taxon>
        <taxon>Actiniidae</taxon>
        <taxon>Actinia</taxon>
    </lineage>
</organism>
<evidence type="ECO:0000250" key="1">
    <source>
        <dbReference type="UniProtKB" id="B9W5G6"/>
    </source>
</evidence>
<evidence type="ECO:0000250" key="2">
    <source>
        <dbReference type="UniProtKB" id="P07845"/>
    </source>
</evidence>
<evidence type="ECO:0000255" key="3"/>
<evidence type="ECO:0000269" key="4">
    <source>
    </source>
</evidence>
<evidence type="ECO:0000269" key="5">
    <source>
    </source>
</evidence>
<evidence type="ECO:0000269" key="6">
    <source>
    </source>
</evidence>
<evidence type="ECO:0000269" key="7">
    <source>
    </source>
</evidence>
<evidence type="ECO:0000269" key="8">
    <source>
    </source>
</evidence>
<evidence type="ECO:0000269" key="9">
    <source ref="3"/>
</evidence>
<evidence type="ECO:0000303" key="10">
    <source>
    </source>
</evidence>
<evidence type="ECO:0000303" key="11">
    <source>
    </source>
</evidence>
<evidence type="ECO:0000303" key="12">
    <source>
    </source>
</evidence>
<evidence type="ECO:0000305" key="13"/>
<evidence type="ECO:0007829" key="14">
    <source>
        <dbReference type="PDB" id="1IAZ"/>
    </source>
</evidence>
<name>ACTP2_ACTEQ</name>
<feature type="signal peptide" evidence="3">
    <location>
        <begin position="1"/>
        <end position="19"/>
    </location>
</feature>
<feature type="propeptide" id="PRO_0000034830" evidence="8 9">
    <location>
        <begin position="20"/>
        <end position="35"/>
    </location>
</feature>
<feature type="chain" id="PRO_0000034831" description="DELTA-actitoxin-Aeq1a" evidence="8">
    <location>
        <begin position="36"/>
        <end position="214"/>
    </location>
</feature>
<feature type="region of interest" description="Plays an important role in the hemolytic activity" evidence="2">
    <location>
        <begin position="38"/>
        <end position="47"/>
    </location>
</feature>
<feature type="region of interest" description="N-terminal region" evidence="4">
    <location>
        <begin position="46"/>
        <end position="65"/>
    </location>
</feature>
<feature type="region of interest" description="Trp-rich region, which is important for the binding to lipid membrane" evidence="4">
    <location>
        <begin position="140"/>
        <end position="155"/>
    </location>
</feature>
<feature type="short sequence motif" description="Cell attachment site, crucial for protein stability" evidence="2 3">
    <location>
        <begin position="179"/>
        <end position="181"/>
    </location>
</feature>
<feature type="binding site" evidence="2">
    <location>
        <position position="89"/>
    </location>
    <ligand>
        <name>phosphocholine</name>
        <dbReference type="ChEBI" id="CHEBI:295975"/>
    </ligand>
</feature>
<feature type="binding site" evidence="2">
    <location>
        <position position="122"/>
    </location>
    <ligand>
        <name>phosphocholine</name>
        <dbReference type="ChEBI" id="CHEBI:295975"/>
    </ligand>
</feature>
<feature type="binding site" evidence="2">
    <location>
        <position position="140"/>
    </location>
    <ligand>
        <name>phosphocholine</name>
        <dbReference type="ChEBI" id="CHEBI:295975"/>
    </ligand>
</feature>
<feature type="binding site" evidence="2">
    <location>
        <position position="142"/>
    </location>
    <ligand>
        <name>phosphocholine</name>
        <dbReference type="ChEBI" id="CHEBI:295975"/>
    </ligand>
</feature>
<feature type="binding site" evidence="2">
    <location>
        <position position="168"/>
    </location>
    <ligand>
        <name>phosphocholine</name>
        <dbReference type="ChEBI" id="CHEBI:295975"/>
    </ligand>
</feature>
<feature type="binding site" evidence="2">
    <location>
        <position position="172"/>
    </location>
    <ligand>
        <name>phosphocholine</name>
        <dbReference type="ChEBI" id="CHEBI:295975"/>
    </ligand>
</feature>
<feature type="binding site" evidence="2">
    <location>
        <position position="173"/>
    </location>
    <ligand>
        <name>phosphocholine</name>
        <dbReference type="ChEBI" id="CHEBI:295975"/>
    </ligand>
</feature>
<feature type="site" description="Important in the initial contact with the lipid membrane" evidence="6">
    <location>
        <position position="147"/>
    </location>
</feature>
<feature type="site" description="Important in the initial contact with the lipid membrane" evidence="6">
    <location>
        <position position="148"/>
    </location>
</feature>
<feature type="site" description="Interacts with the lipid membrane" evidence="6">
    <location>
        <position position="179"/>
    </location>
</feature>
<feature type="site" description="Interacts with the lipid membrane" evidence="6">
    <location>
        <position position="195"/>
    </location>
</feature>
<feature type="sequence variant">
    <original>P</original>
    <variation>D</variation>
    <location>
        <position position="116"/>
    </location>
</feature>
<feature type="mutagenesis site" description="Expressed only 7% of the wild-type hemolytic activity." evidence="5">
    <original>W</original>
    <variation>F</variation>
    <location>
        <position position="80"/>
    </location>
</feature>
<feature type="mutagenesis site" description="Inhibition of direct binding of sphingomyelin." evidence="6">
    <original>W</original>
    <variation>A</variation>
    <location>
        <position position="147"/>
    </location>
</feature>
<feature type="mutagenesis site" description="Inhibition of direct binding of sphingomyelin." evidence="6">
    <original>Y</original>
    <variation>A</variation>
    <location>
        <position position="148"/>
    </location>
</feature>
<feature type="mutagenesis site" description="Expressed only 31% of the wild-type hemolytic activity." evidence="5">
    <original>WW</original>
    <variation>FF</variation>
    <location>
        <begin position="151"/>
        <end position="152"/>
    </location>
</feature>
<feature type="mutagenesis site" description="Expressed only 2% of the wild-type hemolytic activity." evidence="5">
    <original>W</original>
    <variation>F</variation>
    <location>
        <position position="184"/>
    </location>
</feature>
<feature type="strand" evidence="14">
    <location>
        <begin position="43"/>
        <end position="45"/>
    </location>
</feature>
<feature type="helix" evidence="14">
    <location>
        <begin position="46"/>
        <end position="48"/>
    </location>
</feature>
<feature type="helix" evidence="14">
    <location>
        <begin position="51"/>
        <end position="60"/>
    </location>
</feature>
<feature type="strand" evidence="14">
    <location>
        <begin position="65"/>
        <end position="78"/>
    </location>
</feature>
<feature type="strand" evidence="14">
    <location>
        <begin position="80"/>
        <end position="89"/>
    </location>
</feature>
<feature type="strand" evidence="14">
    <location>
        <begin position="98"/>
        <end position="100"/>
    </location>
</feature>
<feature type="strand" evidence="14">
    <location>
        <begin position="104"/>
        <end position="111"/>
    </location>
</feature>
<feature type="strand" evidence="14">
    <location>
        <begin position="114"/>
        <end position="116"/>
    </location>
</feature>
<feature type="strand" evidence="14">
    <location>
        <begin position="121"/>
        <end position="129"/>
    </location>
</feature>
<feature type="strand" evidence="14">
    <location>
        <begin position="134"/>
        <end position="141"/>
    </location>
</feature>
<feature type="turn" evidence="14">
    <location>
        <begin position="145"/>
        <end position="147"/>
    </location>
</feature>
<feature type="strand" evidence="14">
    <location>
        <begin position="151"/>
        <end position="159"/>
    </location>
</feature>
<feature type="helix" evidence="14">
    <location>
        <begin position="165"/>
        <end position="173"/>
    </location>
</feature>
<feature type="strand" evidence="14">
    <location>
        <begin position="181"/>
        <end position="190"/>
    </location>
</feature>
<feature type="strand" evidence="14">
    <location>
        <begin position="193"/>
        <end position="199"/>
    </location>
</feature>
<feature type="strand" evidence="14">
    <location>
        <begin position="201"/>
        <end position="213"/>
    </location>
</feature>
<accession>P61914</accession>
<accession>P17723</accession>
<accession>Q16993</accession>
<accession>Q9TWV2</accession>
<accession>Q9TWV3</accession>
<sequence>MSRLIIVFIVVTMICSATALPSKKIIDEDEEDEKRSADVAGAVIDGASLSFDILKTVLEALGNVKRKIAVGVDNESGKTWTALNTYFRSGTSDIVLPHKVPHGKALLYNGQKDRGPVATGAVGVLAYLMSDGNTLAVLFSVPYDYNWYSNWWNVRIYKGKRRADQRMYEELYYNLSPFRGDNGWHTRNLGYGLKSRGFMNSSGHAILEIHVSKA</sequence>
<dbReference type="EMBL" id="U41661">
    <property type="protein sequence ID" value="AAC47005.1"/>
    <property type="molecule type" value="mRNA"/>
</dbReference>
<dbReference type="PIR" id="JC4682">
    <property type="entry name" value="JC4682"/>
</dbReference>
<dbReference type="PDB" id="1IAZ">
    <property type="method" value="X-ray"/>
    <property type="resolution" value="1.90 A"/>
    <property type="chains" value="A/B=36-214"/>
</dbReference>
<dbReference type="PDB" id="1KD6">
    <property type="method" value="NMR"/>
    <property type="chains" value="A=36-214"/>
</dbReference>
<dbReference type="PDB" id="1TZQ">
    <property type="method" value="X-ray"/>
    <property type="resolution" value="2.30 A"/>
    <property type="chains" value="A=40-214"/>
</dbReference>
<dbReference type="PDBsum" id="1IAZ"/>
<dbReference type="PDBsum" id="1KD6"/>
<dbReference type="PDBsum" id="1TZQ"/>
<dbReference type="BMRB" id="P61914"/>
<dbReference type="SMR" id="P61914"/>
<dbReference type="EnsemblMetazoa" id="EGACTEQ4350043623-RA">
    <property type="protein sequence ID" value="EGACTEQ4350043623-PA"/>
    <property type="gene ID" value="EGACTEQ4350043623"/>
</dbReference>
<dbReference type="OrthoDB" id="5954752at2759"/>
<dbReference type="EvolutionaryTrace" id="P61914"/>
<dbReference type="GO" id="GO:0005576">
    <property type="term" value="C:extracellular region"/>
    <property type="evidence" value="ECO:0007669"/>
    <property type="project" value="UniProtKB-SubCell"/>
</dbReference>
<dbReference type="GO" id="GO:0042151">
    <property type="term" value="C:nematocyst"/>
    <property type="evidence" value="ECO:0007669"/>
    <property type="project" value="UniProtKB-SubCell"/>
</dbReference>
<dbReference type="GO" id="GO:0044218">
    <property type="term" value="C:other organism cell membrane"/>
    <property type="evidence" value="ECO:0007669"/>
    <property type="project" value="UniProtKB-KW"/>
</dbReference>
<dbReference type="GO" id="GO:0046930">
    <property type="term" value="C:pore complex"/>
    <property type="evidence" value="ECO:0007669"/>
    <property type="project" value="InterPro"/>
</dbReference>
<dbReference type="GO" id="GO:0015267">
    <property type="term" value="F:channel activity"/>
    <property type="evidence" value="ECO:0007669"/>
    <property type="project" value="InterPro"/>
</dbReference>
<dbReference type="GO" id="GO:0090729">
    <property type="term" value="F:toxin activity"/>
    <property type="evidence" value="ECO:0007669"/>
    <property type="project" value="UniProtKB-KW"/>
</dbReference>
<dbReference type="GO" id="GO:0051715">
    <property type="term" value="P:cytolysis in another organism"/>
    <property type="evidence" value="ECO:0007669"/>
    <property type="project" value="InterPro"/>
</dbReference>
<dbReference type="GO" id="GO:0006812">
    <property type="term" value="P:monoatomic cation transport"/>
    <property type="evidence" value="ECO:0007669"/>
    <property type="project" value="InterPro"/>
</dbReference>
<dbReference type="GO" id="GO:0046931">
    <property type="term" value="P:pore complex assembly"/>
    <property type="evidence" value="ECO:0007669"/>
    <property type="project" value="InterPro"/>
</dbReference>
<dbReference type="FunFam" id="2.60.270.20:FF:000001">
    <property type="entry name" value="DELTA-actitoxin-Afr1a"/>
    <property type="match status" value="1"/>
</dbReference>
<dbReference type="Gene3D" id="2.60.270.20">
    <property type="entry name" value="Cytolysin/lectin"/>
    <property type="match status" value="1"/>
</dbReference>
<dbReference type="InterPro" id="IPR050677">
    <property type="entry name" value="Actinoporin_PFT"/>
</dbReference>
<dbReference type="InterPro" id="IPR009104">
    <property type="entry name" value="Anemon_actinoporin-like"/>
</dbReference>
<dbReference type="InterPro" id="IPR015926">
    <property type="entry name" value="Cytolysin/lectin"/>
</dbReference>
<dbReference type="PANTHER" id="PTHR40388">
    <property type="entry name" value="BRYOPORIN"/>
    <property type="match status" value="1"/>
</dbReference>
<dbReference type="PANTHER" id="PTHR40388:SF1">
    <property type="entry name" value="BRYOPORIN"/>
    <property type="match status" value="1"/>
</dbReference>
<dbReference type="Pfam" id="PF06369">
    <property type="entry name" value="Anemone_cytotox"/>
    <property type="match status" value="1"/>
</dbReference>
<dbReference type="SUPFAM" id="SSF63724">
    <property type="entry name" value="Cytolysin/lectin"/>
    <property type="match status" value="1"/>
</dbReference>
<reference key="1">
    <citation type="journal article" date="1996" name="Biochem. Biophys. Res. Commun.">
        <title>Cloning, sequencing, and expression of equinatoxin II.</title>
        <authorList>
            <person name="Anderluh G."/>
            <person name="Pungercar J."/>
            <person name="Strukelj B."/>
            <person name="Macek P."/>
            <person name="Gubensek F."/>
        </authorList>
    </citation>
    <scope>NUCLEOTIDE SEQUENCE [MRNA]</scope>
</reference>
<reference key="2">
    <citation type="journal article" date="1994" name="Biochim. Biophys. Acta">
        <title>Primary and secondary structure of a pore-forming toxin from the sea anemone, Actinia equina L., and its association with lipid vesicles.</title>
        <authorList>
            <person name="Belmonte G."/>
            <person name="Menestrina G."/>
            <person name="Pederzolli C."/>
            <person name="Krizaj I."/>
            <person name="Gubensek F."/>
            <person name="Turk T."/>
            <person name="Macek P."/>
        </authorList>
    </citation>
    <scope>PROTEIN SEQUENCE OF 36-214</scope>
    <scope>CIRCULAR DICHROISM ANALYSIS</scope>
</reference>
<reference key="3">
    <citation type="journal article" date="1983" name="Toxicon 21 Suppl.">
        <title>Partial amino acid sequence of equinatoxin.</title>
        <authorList>
            <person name="Ferlan I."/>
            <person name="Jackson K.W."/>
        </authorList>
    </citation>
    <scope>PROTEIN SEQUENCE OF 36-80; 168-197 AND 200-214</scope>
</reference>
<reference key="4">
    <citation type="journal article" date="1992" name="Chem. Pharm. Bull.">
        <title>Isolation and characterization of equinatoxins from the sea anemone Actinia equina L.</title>
        <authorList>
            <person name="Komatsu S."/>
            <person name="Furukawa K."/>
            <person name="Abe K."/>
            <person name="Hirano H."/>
            <person name="Ueda M."/>
        </authorList>
    </citation>
    <scope>PROTEIN SEQUENCE OF 105-118 AND 168-183</scope>
</reference>
<reference key="5">
    <citation type="journal article" date="1988" name="Toxicon">
        <title>Isolation and characterization of three lethal and hemolytic toxins from the sea anemone Actinia equina L.</title>
        <authorList>
            <person name="Macek P."/>
            <person name="Lebez D."/>
        </authorList>
    </citation>
    <scope>AMINO-ACID COMPOSITION</scope>
    <scope>TOXIC DOSE</scope>
</reference>
<reference key="6">
    <citation type="journal article" date="1993" name="J. Membr. Biol.">
        <title>Pore formation by the sea anemone cytolysin equinatoxin II in red blood cells and model lipid membranes.</title>
        <authorList>
            <person name="Belmonte G."/>
            <person name="Pederzolli C."/>
            <person name="Macek P."/>
            <person name="Menestrina G."/>
        </authorList>
    </citation>
    <scope>SPHINGOMYELIN-BINDING</scope>
</reference>
<reference key="7">
    <citation type="journal article" date="1999" name="Eur. J. Biochem.">
        <title>Cysteine-scanning mutagenesis of an eukaryotic pore-forming toxin from sea anemone: topology in lipid membranes.</title>
        <authorList>
            <person name="Anderluh G."/>
            <person name="Barlic A."/>
            <person name="Podlesek Z."/>
            <person name="Macek P."/>
            <person name="Pungercar J."/>
            <person name="Gubensek F."/>
            <person name="Zecchini M.L."/>
            <person name="Serra M.D."/>
            <person name="Menestrina G."/>
        </authorList>
    </citation>
    <scope>MUTAGENESIS</scope>
    <scope>SITE ARG-179 AND SER-195</scope>
    <scope>DOMAINS N-TERMINAL AND TRP-RICH</scope>
</reference>
<reference key="8">
    <citation type="journal article" date="2000" name="Biochem. J.">
        <title>Structure-function studies of tryptophan mutants of equinatoxin II, a sea anemone pore-forming protein.</title>
        <authorList>
            <person name="Malovrh P."/>
            <person name="Barlic A."/>
            <person name="Podlesek Z."/>
            <person name="Macek P."/>
            <person name="Menestrina G."/>
            <person name="Anderluh G."/>
        </authorList>
    </citation>
    <scope>MUTAGENESIS OF TRP-80; 151-TRP-TRP-152 AND TRP-184</scope>
    <scope>SITE INVOLVED IN THE INITIAL CONTACT WITH THE MEMBRANE</scope>
</reference>
<reference key="9">
    <citation type="journal article" date="2002" name="J. Biol. Chem.">
        <title>Two-step membrane binding by Equinatoxin II, a pore-forming toxin from the sea anemone, involves an exposed aromatic cluster and a flexible helix.</title>
        <authorList>
            <person name="Hong Q."/>
            <person name="Gutierrez-Aguirre I."/>
            <person name="Barlic A."/>
            <person name="Malovrh P."/>
            <person name="Kristan K."/>
            <person name="Podlesek Z."/>
            <person name="Macek P."/>
            <person name="Turk D."/>
            <person name="Gonzalez-Manas J.M."/>
            <person name="Lakey J.H."/>
            <person name="Anderluh G."/>
        </authorList>
    </citation>
    <scope>TWO STEPS FOR PORE FORMATION</scope>
    <scope>SITE INVOLVED IN THE INITIAL CONTACT WITH THE MEMBRANE</scope>
</reference>
<reference key="10">
    <citation type="journal article" date="2003" name="J. Biol. Chem.">
        <title>A novel mechanism of pore formation: membrane penetration by the N-terminal amphipathic region of equinatoxin.</title>
        <authorList>
            <person name="Malovrh P."/>
            <person name="Viero G."/>
            <person name="Serra M.D."/>
            <person name="Podlesek Z."/>
            <person name="Lakey J.H."/>
            <person name="Macek P."/>
            <person name="Menestrina G."/>
            <person name="Anderluh G."/>
        </authorList>
    </citation>
    <scope>TOPOLOGY OF N-TERMINAL REGION IN TWO STEPS OF PORE FORMATION</scope>
</reference>
<reference key="11">
    <citation type="journal article" date="2003" name="Biophys. J.">
        <title>Effects of the eukaryotic pore-forming cytolysin Equinatoxin II on lipid membranes and the role of sphingomyelin.</title>
        <authorList>
            <person name="Bonev B.B."/>
            <person name="Lam Y.H."/>
            <person name="Anderluh G."/>
            <person name="Watts A."/>
            <person name="Norton R.S."/>
            <person name="Separovic F."/>
        </authorList>
    </citation>
    <scope>SPHINGOMYELIN-BINDING</scope>
</reference>
<reference key="12">
    <citation type="journal article" date="2008" name="J. Biol. Chem.">
        <title>Molecular determinants of sphingomyelin specificity of a eukaryotic pore-forming toxin.</title>
        <authorList>
            <person name="Bakrac B."/>
            <person name="Gutierrez-Aguirre I."/>
            <person name="Podlesek Z."/>
            <person name="Sonnen A.F.-P."/>
            <person name="Gilbert R.J.C."/>
            <person name="Macek P."/>
            <person name="Lakey J.H."/>
            <person name="Anderluh G."/>
        </authorList>
    </citation>
    <scope>SPHINGOMYELIN-BINDING</scope>
    <scope>MUTAGENESIS OF TRP-147 AND TYR-148</scope>
    <scope>SITES INVOLVED IN THE INITIAL BINDING TO THE LIPID MEMBRANE</scope>
    <scope>HYDROPHOBIC INTERACTION</scope>
</reference>
<reference key="13">
    <citation type="journal article" date="2009" name="Toxicon">
        <title>Molecular mechanism of pore formation by actinoporins.</title>
        <authorList>
            <person name="Kristan K.C."/>
            <person name="Viero G."/>
            <person name="Dalla Serra M."/>
            <person name="Macek P."/>
            <person name="Anderluh G."/>
        </authorList>
    </citation>
    <scope>REVIEW</scope>
</reference>
<reference key="14">
    <citation type="journal article" date="2012" name="Toxicon">
        <title>Development of a rational nomenclature for naming peptide and protein toxins from sea anemones.</title>
        <authorList>
            <person name="Oliveira J.S."/>
            <person name="Fuentes-Silva D."/>
            <person name="King G.F."/>
        </authorList>
    </citation>
    <scope>NOMENCLATURE</scope>
</reference>
<reference key="15">
    <citation type="journal article" date="2001" name="Structure">
        <title>Crystal structure of the soluble form of equinatoxin II, a pore-forming toxin from the sea anemone Actinia equina.</title>
        <authorList>
            <person name="Athanasiadis A."/>
            <person name="Anderluh G."/>
            <person name="Macek P."/>
            <person name="Turk D."/>
        </authorList>
    </citation>
    <scope>X-RAY CRYSTALLOGRAPHY (1.9 ANGSTROMS) OF 40-214</scope>
</reference>
<reference key="16">
    <citation type="journal article" date="2002" name="J. Mol. Biol.">
        <title>Solution structure of the eukaryotic pore-forming cytolysin equinatoxin II: implications for pore formation.</title>
        <authorList>
            <person name="Hinds M.G."/>
            <person name="Zhang W."/>
            <person name="Anderluh G."/>
            <person name="Hansen P.E."/>
            <person name="Norton R.S."/>
        </authorList>
    </citation>
    <scope>STRUCTURE BY NMR OF 36-214</scope>
</reference>
<comment type="function">
    <text evidence="2">Pore-forming protein that forms cations-selective hydrophilic pores of around 1 nm and causes cardiac stimulation and cytolysis. Pore formation is a multi-step process that involves specific recognition of membrane sphingomyelin (but neither cholesterol nor phosphatidylcholine) using aromatic rich region and adjacent phosphocholine (POC) binding site, firm binding to the membrane (mainly driven by hydrophobic interactions) accompanied by the transfer of the N-terminal region to the lipid-water interface and finally pore formation after oligomerization of monomers. Cytolytic effects include red blood cells hemolysis, platelet aggregation and lysis, cytotoxic and cytostatic effects on fibroblasts. Lethality in mammals has been ascribed to severe vasospasm of coronary vessels, cardiac arrhythmia, and inotropic effects.</text>
</comment>
<comment type="subunit">
    <text evidence="1">Octamer or nonamer in membranes. Monomer in the soluble state.</text>
</comment>
<comment type="subcellular location">
    <subcellularLocation>
        <location evidence="1">Secreted</location>
    </subcellularLocation>
    <subcellularLocation>
        <location evidence="2">Nematocyst</location>
    </subcellularLocation>
    <subcellularLocation>
        <location evidence="1">Target cell membrane</location>
    </subcellularLocation>
    <text evidence="1">Forms an alpha-helical membrane channel in the prey.</text>
</comment>
<comment type="domain">
    <text evidence="4">Composed of a long N-terminal alpha-helix and a core region rich in beta-sheet structures. Before the pore formation, the alpha-helix binds the lipid membrane, partitions into the lipid-water interface and stabilizes the monomeric molecule on the membrane. Finally, it traverses the bilayer, thus forming the transmembrane pore.</text>
</comment>
<comment type="toxic dose">
    <text evidence="7">LD(50) is 35 ug/kg by intravenous injection into mice.</text>
</comment>
<comment type="similarity">
    <text evidence="13">Belongs to the actinoporin family. Sea anemone subfamily.</text>
</comment>
<keyword id="KW-0002">3D-structure</keyword>
<keyword id="KW-0165">Cleavage on pair of basic residues</keyword>
<keyword id="KW-0204">Cytolysis</keyword>
<keyword id="KW-0903">Direct protein sequencing</keyword>
<keyword id="KW-0406">Ion transport</keyword>
<keyword id="KW-0472">Membrane</keyword>
<keyword id="KW-0166">Nematocyst</keyword>
<keyword id="KW-0964">Secreted</keyword>
<keyword id="KW-0732">Signal</keyword>
<keyword id="KW-1052">Target cell membrane</keyword>
<keyword id="KW-1053">Target membrane</keyword>
<keyword id="KW-0800">Toxin</keyword>
<keyword id="KW-0812">Transmembrane</keyword>
<keyword id="KW-0813">Transport</keyword>
<protein>
    <recommendedName>
        <fullName evidence="10">DELTA-actitoxin-Aeq1a</fullName>
        <shortName evidence="10">DELTA-AITX-Aeq1a</shortName>
    </recommendedName>
    <alternativeName>
        <fullName evidence="12">Equinatoxin II</fullName>
        <shortName evidence="11">EqT II</shortName>
        <shortName evidence="12">EqTII</shortName>
    </alternativeName>
    <alternativeName>
        <fullName evidence="13">Equinatoxin-2</fullName>
    </alternativeName>
</protein>
<proteinExistence type="evidence at protein level"/>